<dbReference type="EC" id="2.4.1.228" evidence="4"/>
<dbReference type="EMBL" id="AB037883">
    <property type="protein sequence ID" value="BAA95915.1"/>
    <property type="molecule type" value="mRNA"/>
</dbReference>
<dbReference type="EMBL" id="AJ245581">
    <property type="protein sequence ID" value="CAB93532.1"/>
    <property type="molecule type" value="mRNA"/>
</dbReference>
<dbReference type="EMBL" id="AB041418">
    <property type="protein sequence ID" value="BAA94503.1"/>
    <property type="molecule type" value="Genomic_DNA"/>
</dbReference>
<dbReference type="EMBL" id="AY941797">
    <property type="protein sequence ID" value="AAX20109.1"/>
    <property type="molecule type" value="Genomic_DNA"/>
</dbReference>
<dbReference type="EMBL" id="AK312927">
    <property type="protein sequence ID" value="BAG35771.1"/>
    <property type="molecule type" value="mRNA"/>
</dbReference>
<dbReference type="EMBL" id="Z82176">
    <property type="status" value="NOT_ANNOTATED_CDS"/>
    <property type="molecule type" value="Genomic_DNA"/>
</dbReference>
<dbReference type="EMBL" id="CH471138">
    <property type="protein sequence ID" value="EAW73274.1"/>
    <property type="molecule type" value="Genomic_DNA"/>
</dbReference>
<dbReference type="EMBL" id="BC017068">
    <property type="protein sequence ID" value="AAH17068.1"/>
    <property type="molecule type" value="mRNA"/>
</dbReference>
<dbReference type="CCDS" id="CCDS14041.1"/>
<dbReference type="RefSeq" id="NP_001304967.1">
    <property type="nucleotide sequence ID" value="NM_001318038.3"/>
</dbReference>
<dbReference type="RefSeq" id="NP_059132.1">
    <property type="nucleotide sequence ID" value="NM_017436.7"/>
</dbReference>
<dbReference type="RefSeq" id="XP_005261701.1">
    <property type="nucleotide sequence ID" value="XM_005261644.3"/>
</dbReference>
<dbReference type="RefSeq" id="XP_005261703.1">
    <property type="nucleotide sequence ID" value="XM_005261646.5"/>
</dbReference>
<dbReference type="RefSeq" id="XP_005261704.1">
    <property type="nucleotide sequence ID" value="XM_005261647.4"/>
</dbReference>
<dbReference type="RefSeq" id="XP_005261705.1">
    <property type="nucleotide sequence ID" value="XM_005261648.5"/>
</dbReference>
<dbReference type="RefSeq" id="XP_006724328.1">
    <property type="nucleotide sequence ID" value="XM_006724265.4"/>
</dbReference>
<dbReference type="RefSeq" id="XP_006724329.1">
    <property type="nucleotide sequence ID" value="XM_006724266.4"/>
</dbReference>
<dbReference type="RefSeq" id="XP_011528535.1">
    <property type="nucleotide sequence ID" value="XM_011530233.3"/>
</dbReference>
<dbReference type="RefSeq" id="XP_016884320.1">
    <property type="nucleotide sequence ID" value="XM_017028831.2"/>
</dbReference>
<dbReference type="RefSeq" id="XP_047297368.1">
    <property type="nucleotide sequence ID" value="XM_047441412.1"/>
</dbReference>
<dbReference type="SMR" id="Q9NPC4"/>
<dbReference type="BioGRID" id="119825">
    <property type="interactions" value="18"/>
</dbReference>
<dbReference type="FunCoup" id="Q9NPC4">
    <property type="interactions" value="124"/>
</dbReference>
<dbReference type="IntAct" id="Q9NPC4">
    <property type="interactions" value="11"/>
</dbReference>
<dbReference type="MINT" id="Q9NPC4"/>
<dbReference type="STRING" id="9606.ENSP00000384794"/>
<dbReference type="SwissLipids" id="SLP:000000760"/>
<dbReference type="CAZy" id="GT32">
    <property type="family name" value="Glycosyltransferase Family 32"/>
</dbReference>
<dbReference type="GlyCosmos" id="Q9NPC4">
    <property type="glycosylation" value="4 sites, 1 glycan"/>
</dbReference>
<dbReference type="GlyGen" id="Q9NPC4">
    <property type="glycosylation" value="5 sites, 1 N-linked glycan (2 sites), 1 O-linked glycan (2 sites)"/>
</dbReference>
<dbReference type="iPTMnet" id="Q9NPC4"/>
<dbReference type="PhosphoSitePlus" id="Q9NPC4"/>
<dbReference type="BioMuta" id="A4GALT"/>
<dbReference type="DMDM" id="25452796"/>
<dbReference type="jPOST" id="Q9NPC4"/>
<dbReference type="MassIVE" id="Q9NPC4"/>
<dbReference type="PaxDb" id="9606-ENSP00000384794"/>
<dbReference type="PeptideAtlas" id="Q9NPC4"/>
<dbReference type="ProteomicsDB" id="81966"/>
<dbReference type="Antibodypedia" id="239">
    <property type="antibodies" value="230 antibodies from 30 providers"/>
</dbReference>
<dbReference type="DNASU" id="53947"/>
<dbReference type="Ensembl" id="ENST00000249005.3">
    <property type="protein sequence ID" value="ENSP00000249005.2"/>
    <property type="gene ID" value="ENSG00000128274.17"/>
</dbReference>
<dbReference type="Ensembl" id="ENST00000381278.4">
    <property type="protein sequence ID" value="ENSP00000370678.3"/>
    <property type="gene ID" value="ENSG00000128274.17"/>
</dbReference>
<dbReference type="Ensembl" id="ENST00000401850.5">
    <property type="protein sequence ID" value="ENSP00000384794.1"/>
    <property type="gene ID" value="ENSG00000128274.17"/>
</dbReference>
<dbReference type="Ensembl" id="ENST00000642412.2">
    <property type="protein sequence ID" value="ENSP00000494127.1"/>
    <property type="gene ID" value="ENSG00000128274.17"/>
</dbReference>
<dbReference type="GeneID" id="53947"/>
<dbReference type="KEGG" id="hsa:53947"/>
<dbReference type="MANE-Select" id="ENST00000642412.2">
    <property type="protein sequence ID" value="ENSP00000494127.1"/>
    <property type="RefSeq nucleotide sequence ID" value="NM_017436.7"/>
    <property type="RefSeq protein sequence ID" value="NP_059132.1"/>
</dbReference>
<dbReference type="UCSC" id="uc062ewk.1">
    <property type="organism name" value="human"/>
</dbReference>
<dbReference type="AGR" id="HGNC:18149"/>
<dbReference type="CTD" id="53947"/>
<dbReference type="DisGeNET" id="53947"/>
<dbReference type="GeneCards" id="A4GALT"/>
<dbReference type="HGNC" id="HGNC:18149">
    <property type="gene designation" value="A4GALT"/>
</dbReference>
<dbReference type="HPA" id="ENSG00000128274">
    <property type="expression patterns" value="Low tissue specificity"/>
</dbReference>
<dbReference type="MalaCards" id="A4GALT"/>
<dbReference type="MIM" id="111400">
    <property type="type" value="phenotype"/>
</dbReference>
<dbReference type="MIM" id="607922">
    <property type="type" value="gene"/>
</dbReference>
<dbReference type="neXtProt" id="NX_Q9NPC4"/>
<dbReference type="OpenTargets" id="ENSG00000128274"/>
<dbReference type="PharmGKB" id="PA24359"/>
<dbReference type="VEuPathDB" id="HostDB:ENSG00000128274"/>
<dbReference type="eggNOG" id="KOG1928">
    <property type="taxonomic scope" value="Eukaryota"/>
</dbReference>
<dbReference type="GeneTree" id="ENSGT00510000047981"/>
<dbReference type="HOGENOM" id="CLU_049512_2_0_1"/>
<dbReference type="InParanoid" id="Q9NPC4"/>
<dbReference type="OMA" id="CKDSYVV"/>
<dbReference type="OrthoDB" id="409543at2759"/>
<dbReference type="PAN-GO" id="Q9NPC4">
    <property type="GO annotations" value="2 GO annotations based on evolutionary models"/>
</dbReference>
<dbReference type="PhylomeDB" id="Q9NPC4"/>
<dbReference type="TreeFam" id="TF324053"/>
<dbReference type="BioCyc" id="MetaCyc:HS05171-MONOMER"/>
<dbReference type="BRENDA" id="2.4.1.228">
    <property type="organism ID" value="2681"/>
</dbReference>
<dbReference type="PathwayCommons" id="Q9NPC4"/>
<dbReference type="Reactome" id="R-HSA-9840309">
    <property type="pathway name" value="Glycosphingolipid biosynthesis"/>
</dbReference>
<dbReference type="SignaLink" id="Q9NPC4"/>
<dbReference type="BioGRID-ORCS" id="53947">
    <property type="hits" value="14 hits in 1151 CRISPR screens"/>
</dbReference>
<dbReference type="ChiTaRS" id="A4GALT">
    <property type="organism name" value="human"/>
</dbReference>
<dbReference type="GeneWiki" id="A4GALT"/>
<dbReference type="GenomeRNAi" id="53947"/>
<dbReference type="Pharos" id="Q9NPC4">
    <property type="development level" value="Tbio"/>
</dbReference>
<dbReference type="PRO" id="PR:Q9NPC4"/>
<dbReference type="Proteomes" id="UP000005640">
    <property type="component" value="Chromosome 22"/>
</dbReference>
<dbReference type="RNAct" id="Q9NPC4">
    <property type="molecule type" value="protein"/>
</dbReference>
<dbReference type="Bgee" id="ENSG00000128274">
    <property type="expression patterns" value="Expressed in apex of heart and 125 other cell types or tissues"/>
</dbReference>
<dbReference type="ExpressionAtlas" id="Q9NPC4">
    <property type="expression patterns" value="baseline and differential"/>
</dbReference>
<dbReference type="GO" id="GO:0000139">
    <property type="term" value="C:Golgi membrane"/>
    <property type="evidence" value="ECO:0000304"/>
    <property type="project" value="Reactome"/>
</dbReference>
<dbReference type="GO" id="GO:0016020">
    <property type="term" value="C:membrane"/>
    <property type="evidence" value="ECO:0000314"/>
    <property type="project" value="MGI"/>
</dbReference>
<dbReference type="GO" id="GO:0008378">
    <property type="term" value="F:galactosyltransferase activity"/>
    <property type="evidence" value="ECO:0000314"/>
    <property type="project" value="UniProtKB"/>
</dbReference>
<dbReference type="GO" id="GO:0050512">
    <property type="term" value="F:lactosylceramide 4-alpha-galactosyltransferase activity"/>
    <property type="evidence" value="ECO:0000304"/>
    <property type="project" value="Reactome"/>
</dbReference>
<dbReference type="GO" id="GO:0015643">
    <property type="term" value="F:toxic substance binding"/>
    <property type="evidence" value="ECO:0007669"/>
    <property type="project" value="Ensembl"/>
</dbReference>
<dbReference type="GO" id="GO:0001576">
    <property type="term" value="P:globoside biosynthetic process"/>
    <property type="evidence" value="ECO:0007669"/>
    <property type="project" value="Ensembl"/>
</dbReference>
<dbReference type="GO" id="GO:0006688">
    <property type="term" value="P:glycosphingolipid biosynthetic process"/>
    <property type="evidence" value="ECO:0000318"/>
    <property type="project" value="GO_Central"/>
</dbReference>
<dbReference type="GO" id="GO:0007009">
    <property type="term" value="P:plasma membrane organization"/>
    <property type="evidence" value="ECO:0000314"/>
    <property type="project" value="MGI"/>
</dbReference>
<dbReference type="FunFam" id="3.90.550.20:FF:000003">
    <property type="entry name" value="Lactosylceramide 4-alpha-galactosyltransferase"/>
    <property type="match status" value="1"/>
</dbReference>
<dbReference type="Gene3D" id="3.90.550.20">
    <property type="match status" value="1"/>
</dbReference>
<dbReference type="InterPro" id="IPR007652">
    <property type="entry name" value="A1-4-GlycosylTfrase_dom"/>
</dbReference>
<dbReference type="InterPro" id="IPR051981">
    <property type="entry name" value="Glycosyltransf_32"/>
</dbReference>
<dbReference type="InterPro" id="IPR007577">
    <property type="entry name" value="GlycoTrfase_DXD_sugar-bd_CS"/>
</dbReference>
<dbReference type="InterPro" id="IPR029044">
    <property type="entry name" value="Nucleotide-diphossugar_trans"/>
</dbReference>
<dbReference type="PANTHER" id="PTHR12042:SF17">
    <property type="entry name" value="LACTOSYLCERAMIDE 4-ALPHA-GALACTOSYLTRANSFERASE"/>
    <property type="match status" value="1"/>
</dbReference>
<dbReference type="PANTHER" id="PTHR12042">
    <property type="entry name" value="LACTOSYLCERAMIDE 4-ALPHA-GALACTOSYLTRANSFERASE ALPHA- 1,4-GALACTOSYLTRANSFERASE"/>
    <property type="match status" value="1"/>
</dbReference>
<dbReference type="Pfam" id="PF04572">
    <property type="entry name" value="Gb3_synth"/>
    <property type="match status" value="1"/>
</dbReference>
<dbReference type="Pfam" id="PF04488">
    <property type="entry name" value="Gly_transf_sug"/>
    <property type="match status" value="1"/>
</dbReference>
<dbReference type="SUPFAM" id="SSF53448">
    <property type="entry name" value="Nucleotide-diphospho-sugar transferases"/>
    <property type="match status" value="1"/>
</dbReference>
<gene>
    <name type="primary">A4GALT</name>
    <name type="synonym">A14GALT</name>
    <name type="synonym">A4GALT1</name>
</gene>
<proteinExistence type="evidence at protein level"/>
<evidence type="ECO:0000250" key="1"/>
<evidence type="ECO:0000255" key="2"/>
<evidence type="ECO:0000269" key="3">
    <source>
    </source>
</evidence>
<evidence type="ECO:0000269" key="4">
    <source>
    </source>
</evidence>
<evidence type="ECO:0000269" key="5">
    <source>
    </source>
</evidence>
<evidence type="ECO:0000269" key="6">
    <source>
    </source>
</evidence>
<evidence type="ECO:0000269" key="7">
    <source>
    </source>
</evidence>
<evidence type="ECO:0000269" key="8">
    <source ref="4"/>
</evidence>
<evidence type="ECO:0000305" key="9"/>
<evidence type="ECO:0000305" key="10">
    <source>
    </source>
</evidence>
<name>A4GAT_HUMAN</name>
<organism>
    <name type="scientific">Homo sapiens</name>
    <name type="common">Human</name>
    <dbReference type="NCBI Taxonomy" id="9606"/>
    <lineage>
        <taxon>Eukaryota</taxon>
        <taxon>Metazoa</taxon>
        <taxon>Chordata</taxon>
        <taxon>Craniata</taxon>
        <taxon>Vertebrata</taxon>
        <taxon>Euteleostomi</taxon>
        <taxon>Mammalia</taxon>
        <taxon>Eutheria</taxon>
        <taxon>Euarchontoglires</taxon>
        <taxon>Primates</taxon>
        <taxon>Haplorrhini</taxon>
        <taxon>Catarrhini</taxon>
        <taxon>Hominidae</taxon>
        <taxon>Homo</taxon>
    </lineage>
</organism>
<accession>Q9NPC4</accession>
<accession>B2R7C4</accession>
<accession>Q9P1X5</accession>
<sequence>MSKPPDLLLRLLRGAPRQRVCTLFIIGFKFTFFVSIMIYWHVVGEPKEKGQLYNLPAEIPCPTLTPPTPPSHGPTPGNIFFLETSDRTNPNFLFMCSVESAARTHPESHVLVLMKGLPGGNASLPRHLGISLLSCFPNVQMLPLDLRELFRDTPLADWYAAVQGRWEPYLLPVLSDASRIALMWKFGGIYLDTDFIVLKNLRNLTNVLGTQSRYVLNGAFLAFERRHEFMALCMRDFVDHYNGWIWGHQGPQLLTRVFKKWCSIRSLAESRACRGVTTLPPEAFYPIPWQDWKKYFEDINPEELPRLLSATYAVHVWNKKSQGTRFEATSRALLAQLHARYCPTTHEAMKMYL</sequence>
<comment type="function">
    <text evidence="3 4 10">Catalyzes the transfer of galactose from UDP-alpha-D-galactose to lactosylceramide/beta-D-galactosyl-(1-&gt;4)-beta-D-glucosyl-(1&lt;-&gt;1)-ceramide(d18:1(4E)) to produce globotriaosylceramide/globoside Gb3Cer (d18:1(4E)) (PubMed:10748143). Also able to transfer galactose to galactosylceramide/beta-D-Gal-(1&lt;-&gt;1')-Cer (PubMed:10748143). Globoside Gb3Cer is a glycosphingolipid of the globo serie, one of the major types of neutral root structures of glycosphingolipids, that constitute a significant portion of mammalian cell membranes (Probable). Globotriaosylceramide/globoside Gb3Cer in blood and tissue cell membranes is the antigen Pk of blood histogroup P (PubMed:10747952).</text>
</comment>
<comment type="function">
    <text evidence="4">(Microbial infection) Globotriaosylceramide is one of the cellular ligands for bacterial verotoxins.</text>
</comment>
<comment type="catalytic activity">
    <reaction evidence="4">
        <text>a beta-D-Gal-(1-&gt;4)-beta-D-Glc-(1&lt;-&gt;1)-Cer(d18:1(4E)) + UDP-alpha-D-galactose = a globoside Gb3Cer (d18:1(4E)) + UDP + H(+)</text>
        <dbReference type="Rhea" id="RHEA:11924"/>
        <dbReference type="ChEBI" id="CHEBI:15378"/>
        <dbReference type="ChEBI" id="CHEBI:17950"/>
        <dbReference type="ChEBI" id="CHEBI:18313"/>
        <dbReference type="ChEBI" id="CHEBI:58223"/>
        <dbReference type="ChEBI" id="CHEBI:66914"/>
        <dbReference type="EC" id="2.4.1.228"/>
    </reaction>
    <physiologicalReaction direction="left-to-right" evidence="10">
        <dbReference type="Rhea" id="RHEA:11925"/>
    </physiologicalReaction>
</comment>
<comment type="catalytic activity">
    <reaction evidence="4">
        <text>a beta-D-Gal-(1&lt;-&gt;1')-ceramide + UDP-alpha-D-galactose = alpha-D-Gal-(1-&gt;4)-beta-D-Gal-(1&lt;-&gt;1')-Cer + UDP + H(+)</text>
        <dbReference type="Rhea" id="RHEA:60044"/>
        <dbReference type="ChEBI" id="CHEBI:15378"/>
        <dbReference type="ChEBI" id="CHEBI:58223"/>
        <dbReference type="ChEBI" id="CHEBI:66914"/>
        <dbReference type="ChEBI" id="CHEBI:143593"/>
        <dbReference type="ChEBI" id="CHEBI:143594"/>
    </reaction>
    <physiologicalReaction direction="left-to-right" evidence="10">
        <dbReference type="Rhea" id="RHEA:60045"/>
    </physiologicalReaction>
</comment>
<comment type="biophysicochemical properties">
    <kinetics>
        <KM evidence="4">54.5 uM for beta-D-galactosyl-(1-&gt;4)-beta-D-glucosyl-(1&lt;-&gt;1)-ceramide(d18:1(4E))</KM>
        <KM evidence="4">132 uM for beta-D-Gal-(1&lt;-&gt;1')-Cer</KM>
    </kinetics>
</comment>
<comment type="pathway">
    <text evidence="10">Glycolipid biosynthesis.</text>
</comment>
<comment type="subcellular location">
    <subcellularLocation>
        <location evidence="9">Golgi apparatus membrane</location>
        <topology evidence="9">Single-pass type II membrane protein</topology>
    </subcellularLocation>
</comment>
<comment type="tissue specificity">
    <text>Ubiquitous. Highly expressed in kidney, heart, spleen, liver, testis and placenta.</text>
</comment>
<comment type="domain">
    <text evidence="1">The conserved DXD motif is involved in enzyme activity.</text>
</comment>
<comment type="polymorphism">
    <text evidence="5 6 7">Genetic variation in A4GALT is responsible for the P1PK system blood group phenotypes [MIM:111400]. Different combinations or absence of the P blood group system antigens define 5 different phenotypes: P1, P2, P1(k), P2(k), and p. Genetic variation in A4GALT determines the p phenotype, which is rare and does not express any antigens. It is also known as null phenotype; p individuals have antibodies against P, P1 and Pk antigens in their sera. These antibodies are clinically important because they can cause severe transfusion reactions and miscarriage (PubMed:10993874, PubMed:11896312). Genetic variation in A4GALT is also responsible for the NOR polyagglutination syndrome [MIM:111400]. Polyagglutination is the occurrence of red cell agglutination by virtually all human sera, but not by autologous serum or sera from newborns, creating a risk of complications during transfusions of NOR erythrocytes. It is caused by the unusual Gal(alpha1-4)GalNAc glycolipid epitope (PubMed:22965229).</text>
</comment>
<comment type="similarity">
    <text evidence="9">Belongs to the glycosyltransferase 32 family.</text>
</comment>
<comment type="online information" name="Functional Glycomics Gateway - GTase">
    <link uri="http://www.functionalglycomics.org/glycomics/molecule/jsp/glycoEnzyme/viewGlycoEnzyme.jsp?gbpId=gt_hum_428"/>
    <text>Lactosylceramide 4-alpha-galactosyltransferase</text>
</comment>
<feature type="chain" id="PRO_0000080578" description="Lactosylceramide 4-alpha-galactosyltransferase">
    <location>
        <begin position="1"/>
        <end position="353"/>
    </location>
</feature>
<feature type="topological domain" description="Cytoplasmic" evidence="2">
    <location>
        <begin position="1"/>
        <end position="22"/>
    </location>
</feature>
<feature type="transmembrane region" description="Helical; Signal-anchor for type II membrane protein" evidence="2">
    <location>
        <begin position="23"/>
        <end position="43"/>
    </location>
</feature>
<feature type="topological domain" description="Lumenal" evidence="2">
    <location>
        <begin position="44"/>
        <end position="353"/>
    </location>
</feature>
<feature type="short sequence motif" description="DXD motif" evidence="1">
    <location>
        <begin position="192"/>
        <end position="194"/>
    </location>
</feature>
<feature type="glycosylation site" description="N-linked (GlcNAc...) asparagine" evidence="2">
    <location>
        <position position="121"/>
    </location>
</feature>
<feature type="glycosylation site" description="N-linked (GlcNAc...) asparagine" evidence="2">
    <location>
        <position position="203"/>
    </location>
</feature>
<feature type="sequence variant" id="VAR_014296" description="In dbSNP:rs11541159." evidence="3 5 8">
    <original>M</original>
    <variation>V</variation>
    <location>
        <position position="37"/>
    </location>
</feature>
<feature type="sequence variant" id="VAR_017507" description="In p individuals." evidence="6">
    <location>
        <position position="80"/>
    </location>
</feature>
<feature type="sequence variant" id="VAR_022320" description="In dbSNP:rs28915383." evidence="8">
    <original>Q</original>
    <variation>R</variation>
    <location>
        <position position="163"/>
    </location>
</feature>
<feature type="sequence variant" id="VAR_014297" description="In p individuals; complete loss of activity; dbSNP:rs74315453." evidence="3 5">
    <original>M</original>
    <variation>K</variation>
    <location>
        <position position="183"/>
    </location>
</feature>
<feature type="sequence variant" id="VAR_017508" description="In p individuals; partial loss of activity; dbSNP:rs28940572." evidence="5">
    <original>G</original>
    <variation>D</variation>
    <location>
        <position position="187"/>
    </location>
</feature>
<feature type="sequence variant" id="VAR_080910" description="In individuals with NOR polyagglutination syndrome; causes the synthesis of both Gal(alpha1-4)Gal and Gal(alpha1-4)GalNAc moieties; dbSNP:rs397514502." evidence="7">
    <original>Q</original>
    <variation>E</variation>
    <location>
        <position position="211"/>
    </location>
</feature>
<feature type="sequence variant" id="VAR_017509" description="In p individuals; complete loss of activity; dbSNP:rs28940571." evidence="5">
    <original>P</original>
    <variation>L</variation>
    <location>
        <position position="251"/>
    </location>
</feature>
<reference key="1">
    <citation type="journal article" date="2000" name="J. Biol. Chem.">
        <title>Molecular cloning of globotriaosylceramide/CD77 synthase, a glycosyltransferase that initiates the synthesis of globo series glycosphingolipids.</title>
        <authorList>
            <person name="Kojima Y."/>
            <person name="Fukumoto S."/>
            <person name="Furukawa K."/>
            <person name="Okajima T."/>
            <person name="Wiels J."/>
            <person name="Yokoyama K."/>
            <person name="Suzuki Y."/>
            <person name="Urano T."/>
            <person name="Ohta M."/>
            <person name="Furukawa K."/>
        </authorList>
    </citation>
    <scope>NUCLEOTIDE SEQUENCE [MRNA]</scope>
    <scope>FUNCTION</scope>
    <scope>FUNCTION (MICROBIAL INFECTION)</scope>
    <scope>CATALYTIC ACTIVITY</scope>
    <scope>BIOPHYSICOCHEMICAL PROPERTIES</scope>
    <scope>PATHWAY</scope>
    <source>
        <tissue>Melanoma</tissue>
    </source>
</reference>
<reference key="2">
    <citation type="journal article" date="2000" name="J. Biol. Chem.">
        <title>Cloning and expression of the histo-blood group Pk UDP-galactose:Galbeta1-4Glcbeta1-Cer alpha1,4-galactosyltransferase. Molecular genetic basis of the p phenotype.</title>
        <authorList>
            <person name="Steffensen R."/>
            <person name="Carlier K."/>
            <person name="Wiels J."/>
            <person name="Levery S.B."/>
            <person name="Stroud M."/>
            <person name="Cedergren B."/>
            <person name="Nilsson Sojka B."/>
            <person name="Bennett E.P."/>
            <person name="Jersild C."/>
            <person name="Clausen H."/>
        </authorList>
    </citation>
    <scope>NUCLEOTIDE SEQUENCE [MRNA]</scope>
    <scope>FUNCTION</scope>
    <scope>VARIANTS VAL-37 AND LYS-183</scope>
</reference>
<reference key="3">
    <citation type="journal article" date="2004" name="Mol. Biol. Evol.">
        <title>Human-specific amino acid changes found in 103 protein-coding genes.</title>
        <authorList>
            <person name="Kitano T."/>
            <person name="Liu Y.-H."/>
            <person name="Ueda S."/>
            <person name="Saitou N."/>
        </authorList>
    </citation>
    <scope>NUCLEOTIDE SEQUENCE [GENOMIC DNA]</scope>
</reference>
<reference key="4">
    <citation type="submission" date="2005-02" db="EMBL/GenBank/DDBJ databases">
        <authorList>
            <consortium name="SeattleSNPs variation discovery resource"/>
        </authorList>
    </citation>
    <scope>NUCLEOTIDE SEQUENCE [GENOMIC DNA]</scope>
    <scope>VARIANTS VAL-37 AND ARG-163</scope>
</reference>
<reference key="5">
    <citation type="journal article" date="2004" name="Nat. Genet.">
        <title>Complete sequencing and characterization of 21,243 full-length human cDNAs.</title>
        <authorList>
            <person name="Ota T."/>
            <person name="Suzuki Y."/>
            <person name="Nishikawa T."/>
            <person name="Otsuki T."/>
            <person name="Sugiyama T."/>
            <person name="Irie R."/>
            <person name="Wakamatsu A."/>
            <person name="Hayashi K."/>
            <person name="Sato H."/>
            <person name="Nagai K."/>
            <person name="Kimura K."/>
            <person name="Makita H."/>
            <person name="Sekine M."/>
            <person name="Obayashi M."/>
            <person name="Nishi T."/>
            <person name="Shibahara T."/>
            <person name="Tanaka T."/>
            <person name="Ishii S."/>
            <person name="Yamamoto J."/>
            <person name="Saito K."/>
            <person name="Kawai Y."/>
            <person name="Isono Y."/>
            <person name="Nakamura Y."/>
            <person name="Nagahari K."/>
            <person name="Murakami K."/>
            <person name="Yasuda T."/>
            <person name="Iwayanagi T."/>
            <person name="Wagatsuma M."/>
            <person name="Shiratori A."/>
            <person name="Sudo H."/>
            <person name="Hosoiri T."/>
            <person name="Kaku Y."/>
            <person name="Kodaira H."/>
            <person name="Kondo H."/>
            <person name="Sugawara M."/>
            <person name="Takahashi M."/>
            <person name="Kanda K."/>
            <person name="Yokoi T."/>
            <person name="Furuya T."/>
            <person name="Kikkawa E."/>
            <person name="Omura Y."/>
            <person name="Abe K."/>
            <person name="Kamihara K."/>
            <person name="Katsuta N."/>
            <person name="Sato K."/>
            <person name="Tanikawa M."/>
            <person name="Yamazaki M."/>
            <person name="Ninomiya K."/>
            <person name="Ishibashi T."/>
            <person name="Yamashita H."/>
            <person name="Murakawa K."/>
            <person name="Fujimori K."/>
            <person name="Tanai H."/>
            <person name="Kimata M."/>
            <person name="Watanabe M."/>
            <person name="Hiraoka S."/>
            <person name="Chiba Y."/>
            <person name="Ishida S."/>
            <person name="Ono Y."/>
            <person name="Takiguchi S."/>
            <person name="Watanabe S."/>
            <person name="Yosida M."/>
            <person name="Hotuta T."/>
            <person name="Kusano J."/>
            <person name="Kanehori K."/>
            <person name="Takahashi-Fujii A."/>
            <person name="Hara H."/>
            <person name="Tanase T.-O."/>
            <person name="Nomura Y."/>
            <person name="Togiya S."/>
            <person name="Komai F."/>
            <person name="Hara R."/>
            <person name="Takeuchi K."/>
            <person name="Arita M."/>
            <person name="Imose N."/>
            <person name="Musashino K."/>
            <person name="Yuuki H."/>
            <person name="Oshima A."/>
            <person name="Sasaki N."/>
            <person name="Aotsuka S."/>
            <person name="Yoshikawa Y."/>
            <person name="Matsunawa H."/>
            <person name="Ichihara T."/>
            <person name="Shiohata N."/>
            <person name="Sano S."/>
            <person name="Moriya S."/>
            <person name="Momiyama H."/>
            <person name="Satoh N."/>
            <person name="Takami S."/>
            <person name="Terashima Y."/>
            <person name="Suzuki O."/>
            <person name="Nakagawa S."/>
            <person name="Senoh A."/>
            <person name="Mizoguchi H."/>
            <person name="Goto Y."/>
            <person name="Shimizu F."/>
            <person name="Wakebe H."/>
            <person name="Hishigaki H."/>
            <person name="Watanabe T."/>
            <person name="Sugiyama A."/>
            <person name="Takemoto M."/>
            <person name="Kawakami B."/>
            <person name="Yamazaki M."/>
            <person name="Watanabe K."/>
            <person name="Kumagai A."/>
            <person name="Itakura S."/>
            <person name="Fukuzumi Y."/>
            <person name="Fujimori Y."/>
            <person name="Komiyama M."/>
            <person name="Tashiro H."/>
            <person name="Tanigami A."/>
            <person name="Fujiwara T."/>
            <person name="Ono T."/>
            <person name="Yamada K."/>
            <person name="Fujii Y."/>
            <person name="Ozaki K."/>
            <person name="Hirao M."/>
            <person name="Ohmori Y."/>
            <person name="Kawabata A."/>
            <person name="Hikiji T."/>
            <person name="Kobatake N."/>
            <person name="Inagaki H."/>
            <person name="Ikema Y."/>
            <person name="Okamoto S."/>
            <person name="Okitani R."/>
            <person name="Kawakami T."/>
            <person name="Noguchi S."/>
            <person name="Itoh T."/>
            <person name="Shigeta K."/>
            <person name="Senba T."/>
            <person name="Matsumura K."/>
            <person name="Nakajima Y."/>
            <person name="Mizuno T."/>
            <person name="Morinaga M."/>
            <person name="Sasaki M."/>
            <person name="Togashi T."/>
            <person name="Oyama M."/>
            <person name="Hata H."/>
            <person name="Watanabe M."/>
            <person name="Komatsu T."/>
            <person name="Mizushima-Sugano J."/>
            <person name="Satoh T."/>
            <person name="Shirai Y."/>
            <person name="Takahashi Y."/>
            <person name="Nakagawa K."/>
            <person name="Okumura K."/>
            <person name="Nagase T."/>
            <person name="Nomura N."/>
            <person name="Kikuchi H."/>
            <person name="Masuho Y."/>
            <person name="Yamashita R."/>
            <person name="Nakai K."/>
            <person name="Yada T."/>
            <person name="Nakamura Y."/>
            <person name="Ohara O."/>
            <person name="Isogai T."/>
            <person name="Sugano S."/>
        </authorList>
    </citation>
    <scope>NUCLEOTIDE SEQUENCE [LARGE SCALE MRNA]</scope>
    <source>
        <tissue>Tongue</tissue>
    </source>
</reference>
<reference key="6">
    <citation type="journal article" date="1999" name="Nature">
        <title>The DNA sequence of human chromosome 22.</title>
        <authorList>
            <person name="Dunham I."/>
            <person name="Hunt A.R."/>
            <person name="Collins J.E."/>
            <person name="Bruskiewich R."/>
            <person name="Beare D.M."/>
            <person name="Clamp M."/>
            <person name="Smink L.J."/>
            <person name="Ainscough R."/>
            <person name="Almeida J.P."/>
            <person name="Babbage A.K."/>
            <person name="Bagguley C."/>
            <person name="Bailey J."/>
            <person name="Barlow K.F."/>
            <person name="Bates K.N."/>
            <person name="Beasley O.P."/>
            <person name="Bird C.P."/>
            <person name="Blakey S.E."/>
            <person name="Bridgeman A.M."/>
            <person name="Buck D."/>
            <person name="Burgess J."/>
            <person name="Burrill W.D."/>
            <person name="Burton J."/>
            <person name="Carder C."/>
            <person name="Carter N.P."/>
            <person name="Chen Y."/>
            <person name="Clark G."/>
            <person name="Clegg S.M."/>
            <person name="Cobley V.E."/>
            <person name="Cole C.G."/>
            <person name="Collier R.E."/>
            <person name="Connor R."/>
            <person name="Conroy D."/>
            <person name="Corby N.R."/>
            <person name="Coville G.J."/>
            <person name="Cox A.V."/>
            <person name="Davis J."/>
            <person name="Dawson E."/>
            <person name="Dhami P.D."/>
            <person name="Dockree C."/>
            <person name="Dodsworth S.J."/>
            <person name="Durbin R.M."/>
            <person name="Ellington A.G."/>
            <person name="Evans K.L."/>
            <person name="Fey J.M."/>
            <person name="Fleming K."/>
            <person name="French L."/>
            <person name="Garner A.A."/>
            <person name="Gilbert J.G.R."/>
            <person name="Goward M.E."/>
            <person name="Grafham D.V."/>
            <person name="Griffiths M.N.D."/>
            <person name="Hall C."/>
            <person name="Hall R.E."/>
            <person name="Hall-Tamlyn G."/>
            <person name="Heathcott R.W."/>
            <person name="Ho S."/>
            <person name="Holmes S."/>
            <person name="Hunt S.E."/>
            <person name="Jones M.C."/>
            <person name="Kershaw J."/>
            <person name="Kimberley A.M."/>
            <person name="King A."/>
            <person name="Laird G.K."/>
            <person name="Langford C.F."/>
            <person name="Leversha M.A."/>
            <person name="Lloyd C."/>
            <person name="Lloyd D.M."/>
            <person name="Martyn I.D."/>
            <person name="Mashreghi-Mohammadi M."/>
            <person name="Matthews L.H."/>
            <person name="Mccann O.T."/>
            <person name="Mcclay J."/>
            <person name="Mclaren S."/>
            <person name="McMurray A.A."/>
            <person name="Milne S.A."/>
            <person name="Mortimore B.J."/>
            <person name="Odell C.N."/>
            <person name="Pavitt R."/>
            <person name="Pearce A.V."/>
            <person name="Pearson D."/>
            <person name="Phillimore B.J.C.T."/>
            <person name="Phillips S.H."/>
            <person name="Plumb R.W."/>
            <person name="Ramsay H."/>
            <person name="Ramsey Y."/>
            <person name="Rogers L."/>
            <person name="Ross M.T."/>
            <person name="Scott C.E."/>
            <person name="Sehra H.K."/>
            <person name="Skuce C.D."/>
            <person name="Smalley S."/>
            <person name="Smith M.L."/>
            <person name="Soderlund C."/>
            <person name="Spragon L."/>
            <person name="Steward C.A."/>
            <person name="Sulston J.E."/>
            <person name="Swann R.M."/>
            <person name="Vaudin M."/>
            <person name="Wall M."/>
            <person name="Wallis J.M."/>
            <person name="Whiteley M.N."/>
            <person name="Willey D.L."/>
            <person name="Williams L."/>
            <person name="Williams S.A."/>
            <person name="Williamson H."/>
            <person name="Wilmer T.E."/>
            <person name="Wilming L."/>
            <person name="Wright C.L."/>
            <person name="Hubbard T."/>
            <person name="Bentley D.R."/>
            <person name="Beck S."/>
            <person name="Rogers J."/>
            <person name="Shimizu N."/>
            <person name="Minoshima S."/>
            <person name="Kawasaki K."/>
            <person name="Sasaki T."/>
            <person name="Asakawa S."/>
            <person name="Kudoh J."/>
            <person name="Shintani A."/>
            <person name="Shibuya K."/>
            <person name="Yoshizaki Y."/>
            <person name="Aoki N."/>
            <person name="Mitsuyama S."/>
            <person name="Roe B.A."/>
            <person name="Chen F."/>
            <person name="Chu L."/>
            <person name="Crabtree J."/>
            <person name="Deschamps S."/>
            <person name="Do A."/>
            <person name="Do T."/>
            <person name="Dorman A."/>
            <person name="Fang F."/>
            <person name="Fu Y."/>
            <person name="Hu P."/>
            <person name="Hua A."/>
            <person name="Kenton S."/>
            <person name="Lai H."/>
            <person name="Lao H.I."/>
            <person name="Lewis J."/>
            <person name="Lewis S."/>
            <person name="Lin S.-P."/>
            <person name="Loh P."/>
            <person name="Malaj E."/>
            <person name="Nguyen T."/>
            <person name="Pan H."/>
            <person name="Phan S."/>
            <person name="Qi S."/>
            <person name="Qian Y."/>
            <person name="Ray L."/>
            <person name="Ren Q."/>
            <person name="Shaull S."/>
            <person name="Sloan D."/>
            <person name="Song L."/>
            <person name="Wang Q."/>
            <person name="Wang Y."/>
            <person name="Wang Z."/>
            <person name="White J."/>
            <person name="Willingham D."/>
            <person name="Wu H."/>
            <person name="Yao Z."/>
            <person name="Zhan M."/>
            <person name="Zhang G."/>
            <person name="Chissoe S."/>
            <person name="Murray J."/>
            <person name="Miller N."/>
            <person name="Minx P."/>
            <person name="Fulton R."/>
            <person name="Johnson D."/>
            <person name="Bemis G."/>
            <person name="Bentley D."/>
            <person name="Bradshaw H."/>
            <person name="Bourne S."/>
            <person name="Cordes M."/>
            <person name="Du Z."/>
            <person name="Fulton L."/>
            <person name="Goela D."/>
            <person name="Graves T."/>
            <person name="Hawkins J."/>
            <person name="Hinds K."/>
            <person name="Kemp K."/>
            <person name="Latreille P."/>
            <person name="Layman D."/>
            <person name="Ozersky P."/>
            <person name="Rohlfing T."/>
            <person name="Scheet P."/>
            <person name="Walker C."/>
            <person name="Wamsley A."/>
            <person name="Wohldmann P."/>
            <person name="Pepin K."/>
            <person name="Nelson J."/>
            <person name="Korf I."/>
            <person name="Bedell J.A."/>
            <person name="Hillier L.W."/>
            <person name="Mardis E."/>
            <person name="Waterston R."/>
            <person name="Wilson R."/>
            <person name="Emanuel B.S."/>
            <person name="Shaikh T."/>
            <person name="Kurahashi H."/>
            <person name="Saitta S."/>
            <person name="Budarf M.L."/>
            <person name="McDermid H.E."/>
            <person name="Johnson A."/>
            <person name="Wong A.C.C."/>
            <person name="Morrow B.E."/>
            <person name="Edelmann L."/>
            <person name="Kim U.J."/>
            <person name="Shizuya H."/>
            <person name="Simon M.I."/>
            <person name="Dumanski J.P."/>
            <person name="Peyrard M."/>
            <person name="Kedra D."/>
            <person name="Seroussi E."/>
            <person name="Fransson I."/>
            <person name="Tapia I."/>
            <person name="Bruder C.E."/>
            <person name="O'Brien K.P."/>
            <person name="Wilkinson P."/>
            <person name="Bodenteich A."/>
            <person name="Hartman K."/>
            <person name="Hu X."/>
            <person name="Khan A.S."/>
            <person name="Lane L."/>
            <person name="Tilahun Y."/>
            <person name="Wright H."/>
        </authorList>
    </citation>
    <scope>NUCLEOTIDE SEQUENCE [LARGE SCALE GENOMIC DNA]</scope>
</reference>
<reference key="7">
    <citation type="submission" date="2005-07" db="EMBL/GenBank/DDBJ databases">
        <authorList>
            <person name="Mural R.J."/>
            <person name="Istrail S."/>
            <person name="Sutton G.G."/>
            <person name="Florea L."/>
            <person name="Halpern A.L."/>
            <person name="Mobarry C.M."/>
            <person name="Lippert R."/>
            <person name="Walenz B."/>
            <person name="Shatkay H."/>
            <person name="Dew I."/>
            <person name="Miller J.R."/>
            <person name="Flanigan M.J."/>
            <person name="Edwards N.J."/>
            <person name="Bolanos R."/>
            <person name="Fasulo D."/>
            <person name="Halldorsson B.V."/>
            <person name="Hannenhalli S."/>
            <person name="Turner R."/>
            <person name="Yooseph S."/>
            <person name="Lu F."/>
            <person name="Nusskern D.R."/>
            <person name="Shue B.C."/>
            <person name="Zheng X.H."/>
            <person name="Zhong F."/>
            <person name="Delcher A.L."/>
            <person name="Huson D.H."/>
            <person name="Kravitz S.A."/>
            <person name="Mouchard L."/>
            <person name="Reinert K."/>
            <person name="Remington K.A."/>
            <person name="Clark A.G."/>
            <person name="Waterman M.S."/>
            <person name="Eichler E.E."/>
            <person name="Adams M.D."/>
            <person name="Hunkapiller M.W."/>
            <person name="Myers E.W."/>
            <person name="Venter J.C."/>
        </authorList>
    </citation>
    <scope>NUCLEOTIDE SEQUENCE [LARGE SCALE GENOMIC DNA]</scope>
</reference>
<reference key="8">
    <citation type="journal article" date="2004" name="Genome Res.">
        <title>The status, quality, and expansion of the NIH full-length cDNA project: the Mammalian Gene Collection (MGC).</title>
        <authorList>
            <consortium name="The MGC Project Team"/>
        </authorList>
    </citation>
    <scope>NUCLEOTIDE SEQUENCE [LARGE SCALE MRNA]</scope>
    <source>
        <tissue>Uterus</tissue>
    </source>
</reference>
<reference key="9">
    <citation type="journal article" date="2000" name="J. Biol. Chem.">
        <title>Molecular basis for the p phenotype. Identification of distinct and multiple mutations in the alpha 1,4-galactosyltransferase gene in Swedish and Japanese individuals.</title>
        <authorList>
            <person name="Furukawa K."/>
            <person name="Iwamura K."/>
            <person name="Uchikawa M."/>
            <person name="Sojka B.N."/>
            <person name="Wiels J."/>
            <person name="Okajima T."/>
            <person name="Urano T."/>
            <person name="Furukawa K."/>
        </authorList>
    </citation>
    <scope>VARIANTS VAL-37; LYS-183; ASP-187 AND LEU-251</scope>
    <scope>POLYMORPHISM</scope>
</reference>
<reference key="10">
    <citation type="journal article" date="2002" name="Transfusion">
        <title>Three-base deletion and one-base insertion of the alpha(1,4)galactosyltransferase gene responsible for the P phenotype.</title>
        <authorList>
            <person name="Koda Y."/>
            <person name="Soejima M."/>
            <person name="Sato H."/>
            <person name="Maeda Y."/>
            <person name="Kimura H."/>
        </authorList>
    </citation>
    <scope>VARIANT PHE-80 DEL</scope>
    <scope>POLYMORPHISM</scope>
</reference>
<reference key="11">
    <citation type="journal article" date="2012" name="J. Biol. Chem.">
        <title>A single point mutation in the gene encoding Gb3/CD77 synthase causes a rare inherited polyagglutination syndrome.</title>
        <authorList>
            <person name="Suchanowska A."/>
            <person name="Kaczmarek R."/>
            <person name="Duk M."/>
            <person name="Lukasiewicz J."/>
            <person name="Smolarek D."/>
            <person name="Majorczyk E."/>
            <person name="Jaskiewicz E."/>
            <person name="Laskowska A."/>
            <person name="Wasniowska K."/>
            <person name="Grodecka M."/>
            <person name="Lisowska E."/>
            <person name="Czerwinski M."/>
        </authorList>
    </citation>
    <scope>VARIANT GLU-211</scope>
    <scope>POLYMORPHISM</scope>
</reference>
<keyword id="KW-0325">Glycoprotein</keyword>
<keyword id="KW-0328">Glycosyltransferase</keyword>
<keyword id="KW-0333">Golgi apparatus</keyword>
<keyword id="KW-0444">Lipid biosynthesis</keyword>
<keyword id="KW-0443">Lipid metabolism</keyword>
<keyword id="KW-0472">Membrane</keyword>
<keyword id="KW-1267">Proteomics identification</keyword>
<keyword id="KW-1185">Reference proteome</keyword>
<keyword id="KW-0735">Signal-anchor</keyword>
<keyword id="KW-0808">Transferase</keyword>
<keyword id="KW-0812">Transmembrane</keyword>
<keyword id="KW-1133">Transmembrane helix</keyword>
<protein>
    <recommendedName>
        <fullName>Lactosylceramide 4-alpha-galactosyltransferase</fullName>
        <ecNumber evidence="4">2.4.1.228</ecNumber>
    </recommendedName>
    <alternativeName>
        <fullName>Alpha-1,4-N-acetylglucosaminyltransferase</fullName>
    </alternativeName>
    <alternativeName>
        <fullName>Alpha-1,4-galactosyltransferase</fullName>
    </alternativeName>
    <alternativeName>
        <fullName>Alpha4Gal-T1</fullName>
    </alternativeName>
    <alternativeName>
        <fullName>CD77 synthase</fullName>
    </alternativeName>
    <alternativeName>
        <fullName>Globotriaosylceramide synthase</fullName>
        <shortName>Gb3 synthase</shortName>
    </alternativeName>
    <alternativeName>
        <fullName>P1/Pk synthase</fullName>
    </alternativeName>
    <alternativeName>
        <fullName>UDP-galactose:beta-D-galactosyl-beta1-R 4-alpha-D-galactosyltransferase</fullName>
    </alternativeName>
</protein>